<comment type="similarity">
    <text evidence="1">Belongs to the universal ribosomal protein uL16 family.</text>
</comment>
<feature type="chain" id="PRO_1000206204" description="Large ribosomal subunit protein uL16">
    <location>
        <begin position="1"/>
        <end position="182"/>
    </location>
</feature>
<dbReference type="EMBL" id="CP001398">
    <property type="protein sequence ID" value="ACS34512.1"/>
    <property type="molecule type" value="Genomic_DNA"/>
</dbReference>
<dbReference type="RefSeq" id="WP_015859615.1">
    <property type="nucleotide sequence ID" value="NC_012804.1"/>
</dbReference>
<dbReference type="SMR" id="C5A293"/>
<dbReference type="STRING" id="593117.TGAM_2010"/>
<dbReference type="PaxDb" id="593117-TGAM_2010"/>
<dbReference type="GeneID" id="7987067"/>
<dbReference type="KEGG" id="tga:TGAM_2010"/>
<dbReference type="PATRIC" id="fig|593117.10.peg.2020"/>
<dbReference type="eggNOG" id="arCOG04113">
    <property type="taxonomic scope" value="Archaea"/>
</dbReference>
<dbReference type="HOGENOM" id="CLU_084051_0_2_2"/>
<dbReference type="OrthoDB" id="30538at2157"/>
<dbReference type="Proteomes" id="UP000001488">
    <property type="component" value="Chromosome"/>
</dbReference>
<dbReference type="GO" id="GO:1990904">
    <property type="term" value="C:ribonucleoprotein complex"/>
    <property type="evidence" value="ECO:0007669"/>
    <property type="project" value="UniProtKB-KW"/>
</dbReference>
<dbReference type="GO" id="GO:0005840">
    <property type="term" value="C:ribosome"/>
    <property type="evidence" value="ECO:0007669"/>
    <property type="project" value="UniProtKB-KW"/>
</dbReference>
<dbReference type="GO" id="GO:0003735">
    <property type="term" value="F:structural constituent of ribosome"/>
    <property type="evidence" value="ECO:0007669"/>
    <property type="project" value="InterPro"/>
</dbReference>
<dbReference type="GO" id="GO:0006412">
    <property type="term" value="P:translation"/>
    <property type="evidence" value="ECO:0007669"/>
    <property type="project" value="UniProtKB-UniRule"/>
</dbReference>
<dbReference type="CDD" id="cd01433">
    <property type="entry name" value="Ribosomal_L16_L10e"/>
    <property type="match status" value="1"/>
</dbReference>
<dbReference type="FunFam" id="3.90.1170.10:FF:000008">
    <property type="entry name" value="50S ribosomal protein L10e"/>
    <property type="match status" value="1"/>
</dbReference>
<dbReference type="Gene3D" id="3.90.1170.10">
    <property type="entry name" value="Ribosomal protein L10e/L16"/>
    <property type="match status" value="1"/>
</dbReference>
<dbReference type="HAMAP" id="MF_00448">
    <property type="entry name" value="Ribosomal_uL16_arch"/>
    <property type="match status" value="1"/>
</dbReference>
<dbReference type="InterPro" id="IPR047873">
    <property type="entry name" value="Ribosomal_uL16"/>
</dbReference>
<dbReference type="InterPro" id="IPR022981">
    <property type="entry name" value="Ribosomal_uL16_arc"/>
</dbReference>
<dbReference type="InterPro" id="IPR018255">
    <property type="entry name" value="Ribosomal_uL16_CS_euk_arc"/>
</dbReference>
<dbReference type="InterPro" id="IPR016180">
    <property type="entry name" value="Ribosomal_uL16_dom"/>
</dbReference>
<dbReference type="InterPro" id="IPR001197">
    <property type="entry name" value="Ribosomal_uL16_euk_arch"/>
</dbReference>
<dbReference type="InterPro" id="IPR036920">
    <property type="entry name" value="Ribosomal_uL16_sf"/>
</dbReference>
<dbReference type="NCBIfam" id="NF003237">
    <property type="entry name" value="PRK04199.1-2"/>
    <property type="match status" value="1"/>
</dbReference>
<dbReference type="NCBIfam" id="NF003239">
    <property type="entry name" value="PRK04199.1-4"/>
    <property type="match status" value="1"/>
</dbReference>
<dbReference type="PANTHER" id="PTHR11726">
    <property type="entry name" value="60S RIBOSOMAL PROTEIN L10"/>
    <property type="match status" value="1"/>
</dbReference>
<dbReference type="Pfam" id="PF00252">
    <property type="entry name" value="Ribosomal_L16"/>
    <property type="match status" value="1"/>
</dbReference>
<dbReference type="PIRSF" id="PIRSF005590">
    <property type="entry name" value="Ribosomal_L10"/>
    <property type="match status" value="1"/>
</dbReference>
<dbReference type="SUPFAM" id="SSF54686">
    <property type="entry name" value="Ribosomal protein L16p/L10e"/>
    <property type="match status" value="1"/>
</dbReference>
<dbReference type="PROSITE" id="PS01257">
    <property type="entry name" value="RIBOSOMAL_L10E"/>
    <property type="match status" value="1"/>
</dbReference>
<protein>
    <recommendedName>
        <fullName evidence="1">Large ribosomal subunit protein uL16</fullName>
    </recommendedName>
    <alternativeName>
        <fullName evidence="2">50S ribosomal protein L10e</fullName>
    </alternativeName>
</protein>
<keyword id="KW-1185">Reference proteome</keyword>
<keyword id="KW-0687">Ribonucleoprotein</keyword>
<keyword id="KW-0689">Ribosomal protein</keyword>
<evidence type="ECO:0000255" key="1">
    <source>
        <dbReference type="HAMAP-Rule" id="MF_00448"/>
    </source>
</evidence>
<evidence type="ECO:0000305" key="2"/>
<accession>C5A293</accession>
<gene>
    <name evidence="1" type="primary">rpl10e</name>
    <name type="ordered locus">TGAM_2010</name>
</gene>
<name>RL10E_THEGJ</name>
<organism>
    <name type="scientific">Thermococcus gammatolerans (strain DSM 15229 / JCM 11827 / EJ3)</name>
    <dbReference type="NCBI Taxonomy" id="593117"/>
    <lineage>
        <taxon>Archaea</taxon>
        <taxon>Methanobacteriati</taxon>
        <taxon>Methanobacteriota</taxon>
        <taxon>Thermococci</taxon>
        <taxon>Thermococcales</taxon>
        <taxon>Thermococcaceae</taxon>
        <taxon>Thermococcus</taxon>
    </lineage>
</organism>
<proteinExistence type="inferred from homology"/>
<sequence>MGLRPAKIDRDVDKPAYTRREYIRGAPGPKITIFDMGNLSAEFEYEVSLHAEQAMQIRQNALEAIRIQVNRYLQKNVGRSNYHFKIRVYPFQVLRENPMATGRKADRYGNGMRRPFGKPIGLAARVKKDQKILTVWVNEQHLKFALGAMHRAKMKLPYSAYYRIYDREGNDVTTKVLSTMKR</sequence>
<reference key="1">
    <citation type="journal article" date="2007" name="Genome Biol.">
        <title>Genome analysis and genome-wide proteomics of Thermococcus gammatolerans, the most radioresistant organism known amongst the Archaea.</title>
        <authorList>
            <person name="Zivanovic Y."/>
            <person name="Armengaud J."/>
            <person name="Lagorce A."/>
            <person name="Leplat C."/>
            <person name="Guerin P."/>
            <person name="Dutertre M."/>
            <person name="Anthouard V."/>
            <person name="Forterre P."/>
            <person name="Wincker P."/>
            <person name="Confalonieri F."/>
        </authorList>
    </citation>
    <scope>NUCLEOTIDE SEQUENCE [LARGE SCALE GENOMIC DNA]</scope>
    <source>
        <strain>DSM 15229 / JCM 11827 / EJ3</strain>
    </source>
</reference>